<organism>
    <name type="scientific">Rattus norvegicus</name>
    <name type="common">Rat</name>
    <dbReference type="NCBI Taxonomy" id="10116"/>
    <lineage>
        <taxon>Eukaryota</taxon>
        <taxon>Metazoa</taxon>
        <taxon>Chordata</taxon>
        <taxon>Craniata</taxon>
        <taxon>Vertebrata</taxon>
        <taxon>Euteleostomi</taxon>
        <taxon>Mammalia</taxon>
        <taxon>Eutheria</taxon>
        <taxon>Euarchontoglires</taxon>
        <taxon>Glires</taxon>
        <taxon>Rodentia</taxon>
        <taxon>Myomorpha</taxon>
        <taxon>Muroidea</taxon>
        <taxon>Muridae</taxon>
        <taxon>Murinae</taxon>
        <taxon>Rattus</taxon>
    </lineage>
</organism>
<keyword id="KW-1003">Cell membrane</keyword>
<keyword id="KW-1015">Disulfide bond</keyword>
<keyword id="KW-0325">Glycoprotein</keyword>
<keyword id="KW-0406">Ion transport</keyword>
<keyword id="KW-0472">Membrane</keyword>
<keyword id="KW-0479">Metal-binding</keyword>
<keyword id="KW-1185">Reference proteome</keyword>
<keyword id="KW-0915">Sodium</keyword>
<keyword id="KW-0739">Sodium transport</keyword>
<keyword id="KW-0762">Sugar transport</keyword>
<keyword id="KW-0769">Symport</keyword>
<keyword id="KW-0812">Transmembrane</keyword>
<keyword id="KW-1133">Transmembrane helix</keyword>
<keyword id="KW-0813">Transport</keyword>
<feature type="chain" id="PRO_0000105375" description="Sodium/glucose cotransporter 2">
    <location>
        <begin position="1"/>
        <end position="670"/>
    </location>
</feature>
<feature type="topological domain" description="Extracellular" evidence="1">
    <location>
        <begin position="1"/>
        <end position="20"/>
    </location>
</feature>
<feature type="transmembrane region" description="Helical; Name=TM0" evidence="1">
    <location>
        <begin position="21"/>
        <end position="42"/>
    </location>
</feature>
<feature type="topological domain" description="Cytoplasmic" evidence="1">
    <location>
        <begin position="43"/>
        <end position="61"/>
    </location>
</feature>
<feature type="transmembrane region" description="Helical; Name=TM1" evidence="1">
    <location>
        <begin position="62"/>
        <end position="83"/>
    </location>
</feature>
<feature type="topological domain" description="Extracellular" evidence="1 5">
    <location>
        <begin position="84"/>
        <end position="91"/>
    </location>
</feature>
<feature type="transmembrane region" description="Helical; Name=TM2" evidence="1">
    <location>
        <begin position="92"/>
        <end position="112"/>
    </location>
</feature>
<feature type="topological domain" description="Cytoplasmic" evidence="1">
    <location>
        <begin position="113"/>
        <end position="134"/>
    </location>
</feature>
<feature type="transmembrane region" description="Helical; Name=TM3" evidence="1">
    <location>
        <begin position="135"/>
        <end position="164"/>
    </location>
</feature>
<feature type="topological domain" description="Extracellular" evidence="1">
    <location>
        <begin position="165"/>
        <end position="171"/>
    </location>
</feature>
<feature type="transmembrane region" description="Helical; Name=TM4" evidence="1">
    <location>
        <begin position="172"/>
        <end position="193"/>
    </location>
</feature>
<feature type="transmembrane region" description="Helical; Name=TM5" evidence="1">
    <location>
        <begin position="194"/>
        <end position="215"/>
    </location>
</feature>
<feature type="topological domain" description="Extracellular" evidence="1">
    <location>
        <begin position="216"/>
        <end position="273"/>
    </location>
</feature>
<feature type="transmembrane region" description="Helical; Name=TM6" evidence="1">
    <location>
        <begin position="274"/>
        <end position="293"/>
    </location>
</feature>
<feature type="topological domain" description="Cytoplasmic" evidence="1">
    <location>
        <begin position="294"/>
        <end position="307"/>
    </location>
</feature>
<feature type="transmembrane region" description="Helical; Name=TM7" evidence="1">
    <location>
        <begin position="308"/>
        <end position="329"/>
    </location>
</feature>
<feature type="topological domain" description="Extracellular" evidence="1">
    <location>
        <begin position="330"/>
        <end position="373"/>
    </location>
</feature>
<feature type="transmembrane region" description="Helical; Name=TM8" evidence="1">
    <location>
        <begin position="374"/>
        <end position="404"/>
    </location>
</feature>
<feature type="topological domain" description="Cytoplasmic" evidence="1">
    <location>
        <begin position="405"/>
        <end position="422"/>
    </location>
</feature>
<feature type="transmembrane region" description="Helical; Name=TM9" evidence="1">
    <location>
        <begin position="423"/>
        <end position="444"/>
    </location>
</feature>
<feature type="topological domain" description="Extracellular" evidence="1">
    <location>
        <begin position="445"/>
        <end position="449"/>
    </location>
</feature>
<feature type="transmembrane region" description="Helical; Name=TM10" evidence="1">
    <location>
        <begin position="450"/>
        <end position="475"/>
    </location>
</feature>
<feature type="topological domain" description="Cytoplasmic" evidence="1">
    <location>
        <begin position="476"/>
        <end position="480"/>
    </location>
</feature>
<feature type="transmembrane region" description="Helical; Name=TM11" evidence="1">
    <location>
        <begin position="481"/>
        <end position="503"/>
    </location>
</feature>
<feature type="topological domain" description="Extracellular" evidence="1">
    <location>
        <begin position="504"/>
        <end position="521"/>
    </location>
</feature>
<feature type="transmembrane region" description="Helical; Name=TM12" evidence="1">
    <location>
        <begin position="522"/>
        <end position="545"/>
    </location>
</feature>
<feature type="topological domain" description="Cytoplasmic" evidence="1">
    <location>
        <begin position="546"/>
        <end position="649"/>
    </location>
</feature>
<feature type="transmembrane region" description="Helical; Name=TM13" evidence="1">
    <location>
        <begin position="650"/>
        <end position="668"/>
    </location>
</feature>
<feature type="topological domain" description="Extracellular" evidence="1">
    <location>
        <begin position="669"/>
        <end position="670"/>
    </location>
</feature>
<feature type="binding site" evidence="1">
    <location>
        <position position="71"/>
    </location>
    <ligand>
        <name>Na(+)</name>
        <dbReference type="ChEBI" id="CHEBI:29101"/>
    </ligand>
</feature>
<feature type="binding site" evidence="1">
    <location>
        <position position="74"/>
    </location>
    <ligand>
        <name>Na(+)</name>
        <dbReference type="ChEBI" id="CHEBI:29101"/>
    </ligand>
</feature>
<feature type="binding site" evidence="1">
    <location>
        <position position="387"/>
    </location>
    <ligand>
        <name>Na(+)</name>
        <dbReference type="ChEBI" id="CHEBI:29101"/>
    </ligand>
</feature>
<feature type="binding site" evidence="1">
    <location>
        <position position="390"/>
    </location>
    <ligand>
        <name>Na(+)</name>
        <dbReference type="ChEBI" id="CHEBI:29101"/>
    </ligand>
</feature>
<feature type="binding site" evidence="1">
    <location>
        <position position="391"/>
    </location>
    <ligand>
        <name>Na(+)</name>
        <dbReference type="ChEBI" id="CHEBI:29101"/>
    </ligand>
</feature>
<feature type="glycosylation site" description="N-linked (GlcNAc...) asparagine" evidence="6">
    <location>
        <position position="248"/>
    </location>
</feature>
<feature type="disulfide bond" evidence="1">
    <location>
        <begin position="253"/>
        <end position="509"/>
    </location>
</feature>
<feature type="disulfide bond" evidence="1">
    <location>
        <begin position="343"/>
        <end position="349"/>
    </location>
</feature>
<feature type="disulfide bond" evidence="1">
    <location>
        <begin position="353"/>
        <end position="359"/>
    </location>
</feature>
<feature type="disulfide bond" evidence="1">
    <location>
        <begin position="515"/>
        <end position="520"/>
    </location>
</feature>
<dbReference type="EMBL" id="U29881">
    <property type="protein sequence ID" value="AAC52325.1"/>
    <property type="molecule type" value="mRNA"/>
</dbReference>
<dbReference type="RefSeq" id="NP_072112.2">
    <property type="nucleotide sequence ID" value="NM_022590.2"/>
</dbReference>
<dbReference type="SMR" id="P53792"/>
<dbReference type="FunCoup" id="P53792">
    <property type="interactions" value="14"/>
</dbReference>
<dbReference type="STRING" id="10116.ENSRNOP00000027265"/>
<dbReference type="BindingDB" id="P53792"/>
<dbReference type="ChEMBL" id="CHEMBL4316"/>
<dbReference type="DrugCentral" id="P53792"/>
<dbReference type="GuidetoPHARMACOLOGY" id="916"/>
<dbReference type="GlyCosmos" id="P53792">
    <property type="glycosylation" value="1 site, No reported glycans"/>
</dbReference>
<dbReference type="GlyGen" id="P53792">
    <property type="glycosylation" value="1 site"/>
</dbReference>
<dbReference type="iPTMnet" id="P53792"/>
<dbReference type="PhosphoSitePlus" id="P53792"/>
<dbReference type="PaxDb" id="10116-ENSRNOP00000027265"/>
<dbReference type="GeneID" id="64522"/>
<dbReference type="KEGG" id="rno:64522"/>
<dbReference type="UCSC" id="RGD:620217">
    <property type="organism name" value="rat"/>
</dbReference>
<dbReference type="AGR" id="RGD:620217"/>
<dbReference type="CTD" id="6524"/>
<dbReference type="RGD" id="620217">
    <property type="gene designation" value="Slc5a2"/>
</dbReference>
<dbReference type="eggNOG" id="KOG2349">
    <property type="taxonomic scope" value="Eukaryota"/>
</dbReference>
<dbReference type="InParanoid" id="P53792"/>
<dbReference type="OrthoDB" id="41768at9989"/>
<dbReference type="PhylomeDB" id="P53792"/>
<dbReference type="Reactome" id="R-RNO-189200">
    <property type="pathway name" value="Cellular hexose transport"/>
</dbReference>
<dbReference type="PRO" id="PR:P53792"/>
<dbReference type="Proteomes" id="UP000002494">
    <property type="component" value="Unplaced"/>
</dbReference>
<dbReference type="GO" id="GO:0016324">
    <property type="term" value="C:apical plasma membrane"/>
    <property type="evidence" value="ECO:0000250"/>
    <property type="project" value="UniProtKB"/>
</dbReference>
<dbReference type="GO" id="GO:0031526">
    <property type="term" value="C:brush border membrane"/>
    <property type="evidence" value="ECO:0000314"/>
    <property type="project" value="RGD"/>
</dbReference>
<dbReference type="GO" id="GO:0005886">
    <property type="term" value="C:plasma membrane"/>
    <property type="evidence" value="ECO:0000266"/>
    <property type="project" value="RGD"/>
</dbReference>
<dbReference type="GO" id="GO:0015151">
    <property type="term" value="F:alpha-glucoside transmembrane transporter activity"/>
    <property type="evidence" value="ECO:0000266"/>
    <property type="project" value="RGD"/>
</dbReference>
<dbReference type="GO" id="GO:0055056">
    <property type="term" value="F:D-glucose transmembrane transporter activity"/>
    <property type="evidence" value="ECO:0000266"/>
    <property type="project" value="RGD"/>
</dbReference>
<dbReference type="GO" id="GO:0005412">
    <property type="term" value="F:D-glucose:sodium symporter activity"/>
    <property type="evidence" value="ECO:0000314"/>
    <property type="project" value="RGD"/>
</dbReference>
<dbReference type="GO" id="GO:0046872">
    <property type="term" value="F:metal ion binding"/>
    <property type="evidence" value="ECO:0007669"/>
    <property type="project" value="UniProtKB-KW"/>
</dbReference>
<dbReference type="GO" id="GO:0000017">
    <property type="term" value="P:alpha-glucoside transport"/>
    <property type="evidence" value="ECO:0000266"/>
    <property type="project" value="RGD"/>
</dbReference>
<dbReference type="GO" id="GO:0098708">
    <property type="term" value="P:D-glucose import across plasma membrane"/>
    <property type="evidence" value="ECO:0000266"/>
    <property type="project" value="RGD"/>
</dbReference>
<dbReference type="GO" id="GO:1904659">
    <property type="term" value="P:D-glucose transmembrane transport"/>
    <property type="evidence" value="ECO:0000314"/>
    <property type="project" value="RGD"/>
</dbReference>
<dbReference type="GO" id="GO:0035811">
    <property type="term" value="P:negative regulation of urine volume"/>
    <property type="evidence" value="ECO:0000315"/>
    <property type="project" value="RGD"/>
</dbReference>
<dbReference type="GO" id="GO:0035623">
    <property type="term" value="P:renal D-glucose absorption"/>
    <property type="evidence" value="ECO:0000250"/>
    <property type="project" value="UniProtKB"/>
</dbReference>
<dbReference type="GO" id="GO:0036359">
    <property type="term" value="P:renal potassium excretion"/>
    <property type="evidence" value="ECO:0000315"/>
    <property type="project" value="RGD"/>
</dbReference>
<dbReference type="GO" id="GO:0098719">
    <property type="term" value="P:sodium ion import across plasma membrane"/>
    <property type="evidence" value="ECO:0000266"/>
    <property type="project" value="RGD"/>
</dbReference>
<dbReference type="GO" id="GO:0006814">
    <property type="term" value="P:sodium ion transport"/>
    <property type="evidence" value="ECO:0000318"/>
    <property type="project" value="GO_Central"/>
</dbReference>
<dbReference type="FunFam" id="1.20.1730.10:FF:000010">
    <property type="entry name" value="Solute carrier family 5 member 2"/>
    <property type="match status" value="1"/>
</dbReference>
<dbReference type="Gene3D" id="1.20.1730.10">
    <property type="entry name" value="Sodium/glucose cotransporter"/>
    <property type="match status" value="1"/>
</dbReference>
<dbReference type="InterPro" id="IPR038377">
    <property type="entry name" value="Na/Glc_symporter_sf"/>
</dbReference>
<dbReference type="InterPro" id="IPR001734">
    <property type="entry name" value="Na/solute_symporter"/>
</dbReference>
<dbReference type="InterPro" id="IPR018212">
    <property type="entry name" value="Na/solute_symporter_CS"/>
</dbReference>
<dbReference type="NCBIfam" id="TIGR00813">
    <property type="entry name" value="sss"/>
    <property type="match status" value="1"/>
</dbReference>
<dbReference type="PANTHER" id="PTHR11819:SF145">
    <property type="entry name" value="SODIUM_GLUCOSE COTRANSPORTER 2"/>
    <property type="match status" value="1"/>
</dbReference>
<dbReference type="PANTHER" id="PTHR11819">
    <property type="entry name" value="SOLUTE CARRIER FAMILY 5"/>
    <property type="match status" value="1"/>
</dbReference>
<dbReference type="Pfam" id="PF00474">
    <property type="entry name" value="SSF"/>
    <property type="match status" value="1"/>
</dbReference>
<dbReference type="PROSITE" id="PS00456">
    <property type="entry name" value="NA_SOLUT_SYMP_1"/>
    <property type="match status" value="1"/>
</dbReference>
<dbReference type="PROSITE" id="PS00457">
    <property type="entry name" value="NA_SOLUT_SYMP_2"/>
    <property type="match status" value="1"/>
</dbReference>
<dbReference type="PROSITE" id="PS50283">
    <property type="entry name" value="NA_SOLUT_SYMP_3"/>
    <property type="match status" value="1"/>
</dbReference>
<protein>
    <recommendedName>
        <fullName evidence="1">Sodium/glucose cotransporter 2</fullName>
        <shortName>Na(+)/glucose cotransporter 2</shortName>
    </recommendedName>
    <alternativeName>
        <fullName>Low affinity sodium-glucose cotransporter</fullName>
    </alternativeName>
    <alternativeName>
        <fullName>Solute carrier family 5 member 2</fullName>
    </alternativeName>
</protein>
<accession>P53792</accession>
<sequence length="670" mass="72962">MEGHVEEGSELGEQKVLIDNPADILVIAAYFLLVIGVGLWSMFRTNRGTVGGYFLAGRSMVWWPVGASLFASNIGSGHFVGLAGTGAASGLAVAGFEWNALFVVLLLGWLFVPVYLTAGVITMPQYLRKRFGGRRIRLYLSVLSLFLYIFTKISVDMFSGAVFIQQALGWNIYASVIALLGITMIYTVTGGLAALMYTDTVQTFVILAGAFILTGYAFHEVGGYSGLFDKYLGAVTSLTVSKDPAVGNISSTCYQPRPDSYHLLRDPVTGGLPWPALLLGLTIVSGWHWCSDQVIVQRCLAGKNLTHIKAGCILCGYLKLMPMFLMVMPGMISRILYPDEVACVVPEVCKRVCGTEVGCSNIAYPRLVVKLMPNGLRGLMLAVMLAALMSSLASIFNSSSTLFTMDIYTRLRPRAGDRELLLVGRLWVVFIVAVSVAWLPVVQAAQGGQLFDYIQSVSSYLAPPVSAVFVLALFVPRVNEKGAFWGLIGGLLMGLARLIPEFFFGTGSCVRPSACPAIFCRVHYLYFAIILFFCSGFLTLAISRCTAPIPQKHLHRLVFSLRHSKEEREDLDAEELEGPAPPPVQNGCQECAMGIEEVQSPAPGLLRQCLLWFCGMSKSGSGSPPPTTEEVAATTRRLEDISEDPSWARVVNLNALLMMTVAVFLWGFYA</sequence>
<evidence type="ECO:0000250" key="1">
    <source>
        <dbReference type="UniProtKB" id="P31639"/>
    </source>
</evidence>
<evidence type="ECO:0000250" key="2">
    <source>
        <dbReference type="UniProtKB" id="Q923I7"/>
    </source>
</evidence>
<evidence type="ECO:0000269" key="3">
    <source>
    </source>
</evidence>
<evidence type="ECO:0000303" key="4">
    <source>
    </source>
</evidence>
<evidence type="ECO:0000305" key="5"/>
<evidence type="ECO:0000305" key="6">
    <source>
    </source>
</evidence>
<proteinExistence type="evidence at protein level"/>
<comment type="function">
    <text evidence="1 2 3">Electrogenic Na(+)-coupled sugar symporter that actively transports D-glucose at the plasma membrane, with a Na(+) to sugar coupling ratio of 1:1 (By similarity). Transporter activity is driven by a transmembrane Na(+) electrochemical gradient set by the Na(+)/K(+) pump (PubMed:7493971). Unlike SLC5A1/SGLT1, requires the auxiliary protein PDZK1IP1/MAP17 for full transporter activity (By similarity). Has a primary role in D-glucose reabsorption from glomerular filtrate across the brush border of the early proximal tubules of the kidney (By similarity).</text>
</comment>
<comment type="catalytic activity">
    <reaction evidence="3">
        <text>D-glucose(out) + Na(+)(out) = D-glucose(in) + Na(+)(in)</text>
        <dbReference type="Rhea" id="RHEA:70571"/>
        <dbReference type="ChEBI" id="CHEBI:4167"/>
        <dbReference type="ChEBI" id="CHEBI:29101"/>
    </reaction>
    <physiologicalReaction direction="left-to-right" evidence="6">
        <dbReference type="Rhea" id="RHEA:70572"/>
    </physiologicalReaction>
</comment>
<comment type="activity regulation">
    <text evidence="1">Enhanced by the interaction with PDZK1IP1/MAP17.</text>
</comment>
<comment type="subunit">
    <text evidence="1">Forms a heterodimer (via TM13) with PDZK1IP1 (via N-terminal transmembrane helix); this interaction enhances SLC5A2 transporter activity.</text>
</comment>
<comment type="subcellular location">
    <subcellularLocation>
        <location evidence="2">Apical cell membrane</location>
        <topology evidence="1">Multi-pass membrane protein</topology>
    </subcellularLocation>
</comment>
<comment type="tissue specificity">
    <text evidence="3">Kidney, in proximal tubule S1 segments.</text>
</comment>
<comment type="developmental stage">
    <text evidence="3">Appears on embryonic day 17 and gradually increases until day 19. Decreases between day 19 and birth.</text>
</comment>
<comment type="PTM">
    <text evidence="6">Glycosylated at a single site.</text>
</comment>
<comment type="similarity">
    <text evidence="5">Belongs to the sodium:solute symporter (SSF) (TC 2.A.21) family.</text>
</comment>
<name>SC5A2_RAT</name>
<gene>
    <name type="primary">Slc5a2</name>
    <name evidence="4" type="synonym">Sglt2</name>
</gene>
<reference key="1">
    <citation type="journal article" date="1995" name="J. Biol. Chem.">
        <title>Molecular characteristics of Na(+)-coupled glucose transporters in adult and embryonic rat kidney.</title>
        <authorList>
            <person name="You G."/>
            <person name="Lee W.-S."/>
            <person name="Barros E.J.G."/>
            <person name="Kanai Y."/>
            <person name="Huo T.-L."/>
            <person name="Khawaja S."/>
            <person name="Wells R.G."/>
            <person name="Nigam S.K."/>
            <person name="Hediger M.A."/>
        </authorList>
    </citation>
    <scope>NUCLEOTIDE SEQUENCE [MRNA]</scope>
    <scope>FUNCTION</scope>
    <scope>TRANSPORTER ACTIVITY</scope>
    <scope>TISSUE SPECIFICITY</scope>
    <scope>DEVELOPMENTAL STAGE</scope>
    <scope>GLYCOSYLATION AT ASN-248</scope>
    <source>
        <strain>Sprague-Dawley</strain>
        <tissue>Kidney</tissue>
    </source>
</reference>